<proteinExistence type="inferred from homology"/>
<gene>
    <name evidence="1" type="primary">miaB</name>
    <name type="ordered locus">HPAG1_0271</name>
</gene>
<feature type="chain" id="PRO_0000374338" description="tRNA-2-methylthio-N(6)-dimethylallyladenosine synthase">
    <location>
        <begin position="1"/>
        <end position="437"/>
    </location>
</feature>
<feature type="domain" description="MTTase N-terminal" evidence="1">
    <location>
        <begin position="1"/>
        <end position="115"/>
    </location>
</feature>
<feature type="domain" description="Radical SAM core" evidence="2">
    <location>
        <begin position="134"/>
        <end position="367"/>
    </location>
</feature>
<feature type="domain" description="TRAM" evidence="1">
    <location>
        <begin position="370"/>
        <end position="436"/>
    </location>
</feature>
<feature type="binding site" evidence="1">
    <location>
        <position position="10"/>
    </location>
    <ligand>
        <name>[4Fe-4S] cluster</name>
        <dbReference type="ChEBI" id="CHEBI:49883"/>
        <label>1</label>
    </ligand>
</feature>
<feature type="binding site" evidence="1">
    <location>
        <position position="46"/>
    </location>
    <ligand>
        <name>[4Fe-4S] cluster</name>
        <dbReference type="ChEBI" id="CHEBI:49883"/>
        <label>1</label>
    </ligand>
</feature>
<feature type="binding site" evidence="1">
    <location>
        <position position="78"/>
    </location>
    <ligand>
        <name>[4Fe-4S] cluster</name>
        <dbReference type="ChEBI" id="CHEBI:49883"/>
        <label>1</label>
    </ligand>
</feature>
<feature type="binding site" evidence="1">
    <location>
        <position position="148"/>
    </location>
    <ligand>
        <name>[4Fe-4S] cluster</name>
        <dbReference type="ChEBI" id="CHEBI:49883"/>
        <label>2</label>
        <note>4Fe-4S-S-AdoMet</note>
    </ligand>
</feature>
<feature type="binding site" evidence="1">
    <location>
        <position position="152"/>
    </location>
    <ligand>
        <name>[4Fe-4S] cluster</name>
        <dbReference type="ChEBI" id="CHEBI:49883"/>
        <label>2</label>
        <note>4Fe-4S-S-AdoMet</note>
    </ligand>
</feature>
<feature type="binding site" evidence="1">
    <location>
        <position position="155"/>
    </location>
    <ligand>
        <name>[4Fe-4S] cluster</name>
        <dbReference type="ChEBI" id="CHEBI:49883"/>
        <label>2</label>
        <note>4Fe-4S-S-AdoMet</note>
    </ligand>
</feature>
<dbReference type="EC" id="2.8.4.3" evidence="1"/>
<dbReference type="EMBL" id="CP000241">
    <property type="protein sequence ID" value="ABF84338.1"/>
    <property type="molecule type" value="Genomic_DNA"/>
</dbReference>
<dbReference type="RefSeq" id="WP_000870150.1">
    <property type="nucleotide sequence ID" value="NC_008086.1"/>
</dbReference>
<dbReference type="SMR" id="Q1CUN4"/>
<dbReference type="KEGG" id="hpa:HPAG1_0271"/>
<dbReference type="HOGENOM" id="CLU_018697_2_0_7"/>
<dbReference type="GO" id="GO:0005829">
    <property type="term" value="C:cytosol"/>
    <property type="evidence" value="ECO:0007669"/>
    <property type="project" value="TreeGrafter"/>
</dbReference>
<dbReference type="GO" id="GO:0051539">
    <property type="term" value="F:4 iron, 4 sulfur cluster binding"/>
    <property type="evidence" value="ECO:0007669"/>
    <property type="project" value="UniProtKB-UniRule"/>
</dbReference>
<dbReference type="GO" id="GO:0046872">
    <property type="term" value="F:metal ion binding"/>
    <property type="evidence" value="ECO:0007669"/>
    <property type="project" value="UniProtKB-KW"/>
</dbReference>
<dbReference type="GO" id="GO:0035597">
    <property type="term" value="F:N6-isopentenyladenosine methylthiotransferase activity"/>
    <property type="evidence" value="ECO:0007669"/>
    <property type="project" value="TreeGrafter"/>
</dbReference>
<dbReference type="CDD" id="cd01335">
    <property type="entry name" value="Radical_SAM"/>
    <property type="match status" value="1"/>
</dbReference>
<dbReference type="FunFam" id="3.40.50.12160:FF:000003">
    <property type="entry name" value="CDK5 regulatory subunit-associated protein 1"/>
    <property type="match status" value="1"/>
</dbReference>
<dbReference type="FunFam" id="3.80.30.20:FF:000013">
    <property type="entry name" value="tRNA-2-methylthio-N(6)-dimethylallyladenosine synthase"/>
    <property type="match status" value="1"/>
</dbReference>
<dbReference type="Gene3D" id="3.40.50.12160">
    <property type="entry name" value="Methylthiotransferase, N-terminal domain"/>
    <property type="match status" value="1"/>
</dbReference>
<dbReference type="Gene3D" id="3.80.30.20">
    <property type="entry name" value="tm_1862 like domain"/>
    <property type="match status" value="1"/>
</dbReference>
<dbReference type="HAMAP" id="MF_01864">
    <property type="entry name" value="tRNA_metthiotr_MiaB"/>
    <property type="match status" value="1"/>
</dbReference>
<dbReference type="InterPro" id="IPR006638">
    <property type="entry name" value="Elp3/MiaA/NifB-like_rSAM"/>
</dbReference>
<dbReference type="InterPro" id="IPR005839">
    <property type="entry name" value="Methylthiotransferase"/>
</dbReference>
<dbReference type="InterPro" id="IPR020612">
    <property type="entry name" value="Methylthiotransferase_CS"/>
</dbReference>
<dbReference type="InterPro" id="IPR013848">
    <property type="entry name" value="Methylthiotransferase_N"/>
</dbReference>
<dbReference type="InterPro" id="IPR038135">
    <property type="entry name" value="Methylthiotransferase_N_sf"/>
</dbReference>
<dbReference type="InterPro" id="IPR006463">
    <property type="entry name" value="MiaB_methiolase"/>
</dbReference>
<dbReference type="InterPro" id="IPR007197">
    <property type="entry name" value="rSAM"/>
</dbReference>
<dbReference type="InterPro" id="IPR023404">
    <property type="entry name" value="rSAM_horseshoe"/>
</dbReference>
<dbReference type="InterPro" id="IPR002792">
    <property type="entry name" value="TRAM_dom"/>
</dbReference>
<dbReference type="NCBIfam" id="TIGR01574">
    <property type="entry name" value="miaB-methiolase"/>
    <property type="match status" value="1"/>
</dbReference>
<dbReference type="NCBIfam" id="TIGR00089">
    <property type="entry name" value="MiaB/RimO family radical SAM methylthiotransferase"/>
    <property type="match status" value="1"/>
</dbReference>
<dbReference type="PANTHER" id="PTHR43020">
    <property type="entry name" value="CDK5 REGULATORY SUBUNIT-ASSOCIATED PROTEIN 1"/>
    <property type="match status" value="1"/>
</dbReference>
<dbReference type="PANTHER" id="PTHR43020:SF2">
    <property type="entry name" value="MITOCHONDRIAL TRNA METHYLTHIOTRANSFERASE CDK5RAP1"/>
    <property type="match status" value="1"/>
</dbReference>
<dbReference type="Pfam" id="PF04055">
    <property type="entry name" value="Radical_SAM"/>
    <property type="match status" value="1"/>
</dbReference>
<dbReference type="Pfam" id="PF00919">
    <property type="entry name" value="UPF0004"/>
    <property type="match status" value="1"/>
</dbReference>
<dbReference type="SFLD" id="SFLDF00273">
    <property type="entry name" value="(dimethylallyl)adenosine_tRNA"/>
    <property type="match status" value="1"/>
</dbReference>
<dbReference type="SFLD" id="SFLDG01082">
    <property type="entry name" value="B12-binding_domain_containing"/>
    <property type="match status" value="1"/>
</dbReference>
<dbReference type="SFLD" id="SFLDG01061">
    <property type="entry name" value="methylthiotransferase"/>
    <property type="match status" value="1"/>
</dbReference>
<dbReference type="SMART" id="SM00729">
    <property type="entry name" value="Elp3"/>
    <property type="match status" value="1"/>
</dbReference>
<dbReference type="SUPFAM" id="SSF102114">
    <property type="entry name" value="Radical SAM enzymes"/>
    <property type="match status" value="1"/>
</dbReference>
<dbReference type="PROSITE" id="PS51449">
    <property type="entry name" value="MTTASE_N"/>
    <property type="match status" value="1"/>
</dbReference>
<dbReference type="PROSITE" id="PS01278">
    <property type="entry name" value="MTTASE_RADICAL"/>
    <property type="match status" value="1"/>
</dbReference>
<dbReference type="PROSITE" id="PS51918">
    <property type="entry name" value="RADICAL_SAM"/>
    <property type="match status" value="1"/>
</dbReference>
<dbReference type="PROSITE" id="PS50926">
    <property type="entry name" value="TRAM"/>
    <property type="match status" value="1"/>
</dbReference>
<reference key="1">
    <citation type="journal article" date="2006" name="Proc. Natl. Acad. Sci. U.S.A.">
        <title>The complete genome sequence of a chronic atrophic gastritis Helicobacter pylori strain: evolution during disease progression.</title>
        <authorList>
            <person name="Oh J.D."/>
            <person name="Kling-Baeckhed H."/>
            <person name="Giannakis M."/>
            <person name="Xu J."/>
            <person name="Fulton R.S."/>
            <person name="Fulton L.A."/>
            <person name="Cordum H.S."/>
            <person name="Wang C."/>
            <person name="Elliott G."/>
            <person name="Edwards J."/>
            <person name="Mardis E.R."/>
            <person name="Engstrand L.G."/>
            <person name="Gordon J.I."/>
        </authorList>
    </citation>
    <scope>NUCLEOTIDE SEQUENCE [LARGE SCALE GENOMIC DNA]</scope>
    <source>
        <strain>HPAG1</strain>
    </source>
</reference>
<keyword id="KW-0004">4Fe-4S</keyword>
<keyword id="KW-0963">Cytoplasm</keyword>
<keyword id="KW-0408">Iron</keyword>
<keyword id="KW-0411">Iron-sulfur</keyword>
<keyword id="KW-0479">Metal-binding</keyword>
<keyword id="KW-0949">S-adenosyl-L-methionine</keyword>
<keyword id="KW-0808">Transferase</keyword>
<keyword id="KW-0819">tRNA processing</keyword>
<organism>
    <name type="scientific">Helicobacter pylori (strain HPAG1)</name>
    <dbReference type="NCBI Taxonomy" id="357544"/>
    <lineage>
        <taxon>Bacteria</taxon>
        <taxon>Pseudomonadati</taxon>
        <taxon>Campylobacterota</taxon>
        <taxon>Epsilonproteobacteria</taxon>
        <taxon>Campylobacterales</taxon>
        <taxon>Helicobacteraceae</taxon>
        <taxon>Helicobacter</taxon>
    </lineage>
</organism>
<name>MIAB_HELPH</name>
<accession>Q1CUN4</accession>
<evidence type="ECO:0000255" key="1">
    <source>
        <dbReference type="HAMAP-Rule" id="MF_01864"/>
    </source>
</evidence>
<evidence type="ECO:0000255" key="2">
    <source>
        <dbReference type="PROSITE-ProRule" id="PRU01266"/>
    </source>
</evidence>
<comment type="function">
    <text evidence="1">Catalyzes the methylthiolation of N6-(dimethylallyl)adenosine (i(6)A), leading to the formation of 2-methylthio-N6-(dimethylallyl)adenosine (ms(2)i(6)A) at position 37 in tRNAs that read codons beginning with uridine.</text>
</comment>
<comment type="catalytic activity">
    <reaction evidence="1">
        <text>N(6)-dimethylallyladenosine(37) in tRNA + (sulfur carrier)-SH + AH2 + 2 S-adenosyl-L-methionine = 2-methylsulfanyl-N(6)-dimethylallyladenosine(37) in tRNA + (sulfur carrier)-H + 5'-deoxyadenosine + L-methionine + A + S-adenosyl-L-homocysteine + 2 H(+)</text>
        <dbReference type="Rhea" id="RHEA:37067"/>
        <dbReference type="Rhea" id="RHEA-COMP:10375"/>
        <dbReference type="Rhea" id="RHEA-COMP:10376"/>
        <dbReference type="Rhea" id="RHEA-COMP:14737"/>
        <dbReference type="Rhea" id="RHEA-COMP:14739"/>
        <dbReference type="ChEBI" id="CHEBI:13193"/>
        <dbReference type="ChEBI" id="CHEBI:15378"/>
        <dbReference type="ChEBI" id="CHEBI:17319"/>
        <dbReference type="ChEBI" id="CHEBI:17499"/>
        <dbReference type="ChEBI" id="CHEBI:29917"/>
        <dbReference type="ChEBI" id="CHEBI:57844"/>
        <dbReference type="ChEBI" id="CHEBI:57856"/>
        <dbReference type="ChEBI" id="CHEBI:59789"/>
        <dbReference type="ChEBI" id="CHEBI:64428"/>
        <dbReference type="ChEBI" id="CHEBI:74415"/>
        <dbReference type="ChEBI" id="CHEBI:74417"/>
        <dbReference type="EC" id="2.8.4.3"/>
    </reaction>
</comment>
<comment type="cofactor">
    <cofactor evidence="1">
        <name>[4Fe-4S] cluster</name>
        <dbReference type="ChEBI" id="CHEBI:49883"/>
    </cofactor>
    <text evidence="1">Binds 2 [4Fe-4S] clusters. One cluster is coordinated with 3 cysteines and an exchangeable S-adenosyl-L-methionine.</text>
</comment>
<comment type="subunit">
    <text evidence="1">Monomer.</text>
</comment>
<comment type="subcellular location">
    <subcellularLocation>
        <location evidence="1">Cytoplasm</location>
    </subcellularLocation>
</comment>
<comment type="similarity">
    <text evidence="1">Belongs to the methylthiotransferase family. MiaB subfamily.</text>
</comment>
<sequence length="437" mass="49533">MKVYIETMGCAMNSRDSEHLLSELSKLDYKETNDPKIADLILINTCSVREKPERKLFSEIGQFAKIKKPNAKIGVCGCTASHMGADILKKAPSVSFVLGARNVSKISQVIHKEKAVEVAIDYDESAYAFEFFEKKAQIRSLLNISIGCDKKCAYCIVPHTRGKEISIPMDLILKEAEKLANNGTKELMLLGQNVNNYGVRFSSEHAKVDFSDLLDKLSEIQGIERIRFTSPHPLHMNDGFLERFAKNPKVCKSIHMPLQSGSSAVLKMMRRGYSKEWFLNRVERLKALVPEVGISTDIIVGFPNESDKDFEDTMEVLEKVRFDTLYSFIYSPRPFTEAGAWKERVPLEVSYSRLERLQNRHKEILEEKAKLEVGKTHVVLVENRREMDNQIVGFEGRSDTGKFIEVTCKEKRNPGELVKVEIISHSKGRLIAAIKGN</sequence>
<protein>
    <recommendedName>
        <fullName evidence="1">tRNA-2-methylthio-N(6)-dimethylallyladenosine synthase</fullName>
        <ecNumber evidence="1">2.8.4.3</ecNumber>
    </recommendedName>
    <alternativeName>
        <fullName evidence="1">(Dimethylallyl)adenosine tRNA methylthiotransferase MiaB</fullName>
    </alternativeName>
    <alternativeName>
        <fullName evidence="1">tRNA-i(6)A37 methylthiotransferase</fullName>
    </alternativeName>
</protein>